<reference key="1">
    <citation type="journal article" date="1992" name="EMBO J.">
        <title>Primary structure and functional expression of the Na/Ca,K-exchanger from bovine rod photoreceptors.</title>
        <authorList>
            <person name="Reilaender H."/>
            <person name="Achilles A."/>
            <person name="Friedel U."/>
            <person name="Maul G."/>
            <person name="Lottspeich F."/>
            <person name="Cook N.J."/>
        </authorList>
    </citation>
    <scope>NUCLEOTIDE SEQUENCE [MRNA] (ISOFORM 2)</scope>
    <scope>PROTEIN SEQUENCE OF 66-88; 232-249; 647-660 AND 1119-1136</scope>
    <scope>FUNCTION</scope>
    <scope>TRANSPORTER ACTIVITY</scope>
    <scope>TISSUE SPECIFICITY</scope>
    <source>
        <tissue>Retina</tissue>
    </source>
</reference>
<reference key="2">
    <citation type="journal article" date="1998" name="Invest. Ophthalmol. Vis. Sci.">
        <title>cDNA cloning of the human retinal rod Na-Ca + K exchanger: comparison with a revised bovine sequence.</title>
        <authorList>
            <person name="Tucker J.E."/>
            <person name="Winkfein R.J."/>
            <person name="Cooper C.B."/>
            <person name="Schnetkamp P.P.M."/>
        </authorList>
    </citation>
    <scope>NUCLEOTIDE SEQUENCE [MRNA] OF 725-1216 (ISOFORM 1)</scope>
    <source>
        <tissue>Retina</tissue>
    </source>
</reference>
<reference key="3">
    <citation type="journal article" date="1999" name="J. Biol. Chem.">
        <title>The retinal rod Na(+)/Ca(2+),K(+) exchanger contains a noncleaved signal sequence required for translocation of the N-terminus.</title>
        <authorList>
            <person name="McKiernan C.J."/>
            <person name="Friedlander M."/>
        </authorList>
    </citation>
    <scope>FUNCTION OF THE N-TERMINUS IN TARGETING</scope>
    <scope>MUTAGENESIS OF ARG-65</scope>
    <scope>GLYCOSYLATION</scope>
</reference>
<gene>
    <name type="primary">SLC24A1</name>
    <name type="synonym">NCKX1</name>
</gene>
<accession>Q28139</accession>
<accession>O46384</accession>
<dbReference type="EMBL" id="X66481">
    <property type="protein sequence ID" value="CAA47108.1"/>
    <property type="molecule type" value="mRNA"/>
</dbReference>
<dbReference type="EMBL" id="AF025664">
    <property type="protein sequence ID" value="AAB88884.1"/>
    <property type="molecule type" value="mRNA"/>
</dbReference>
<dbReference type="PIR" id="S20969">
    <property type="entry name" value="S20969"/>
</dbReference>
<dbReference type="RefSeq" id="NP_777080.1">
    <molecule id="Q28139-2"/>
    <property type="nucleotide sequence ID" value="NM_174655.2"/>
</dbReference>
<dbReference type="FunCoup" id="Q28139">
    <property type="interactions" value="317"/>
</dbReference>
<dbReference type="STRING" id="9913.ENSBTAP00000063021"/>
<dbReference type="TCDB" id="2.A.19.4.1">
    <property type="family name" value="the ca(2+):cation antiporter (caca) family"/>
</dbReference>
<dbReference type="GlyCosmos" id="Q28139">
    <property type="glycosylation" value="2 sites, No reported glycans"/>
</dbReference>
<dbReference type="GlyGen" id="Q28139">
    <property type="glycosylation" value="2 sites"/>
</dbReference>
<dbReference type="PaxDb" id="9913-ENSBTAP00000036386"/>
<dbReference type="GeneID" id="282474"/>
<dbReference type="KEGG" id="bta:282474"/>
<dbReference type="CTD" id="9187"/>
<dbReference type="eggNOG" id="KOG1307">
    <property type="taxonomic scope" value="Eukaryota"/>
</dbReference>
<dbReference type="HOGENOM" id="CLU_007948_6_0_1"/>
<dbReference type="InParanoid" id="Q28139"/>
<dbReference type="OrthoDB" id="2127281at2759"/>
<dbReference type="TreeFam" id="TF318759"/>
<dbReference type="Proteomes" id="UP000009136">
    <property type="component" value="Unplaced"/>
</dbReference>
<dbReference type="GO" id="GO:0005886">
    <property type="term" value="C:plasma membrane"/>
    <property type="evidence" value="ECO:0000318"/>
    <property type="project" value="GO_Central"/>
</dbReference>
<dbReference type="GO" id="GO:0005262">
    <property type="term" value="F:calcium channel activity"/>
    <property type="evidence" value="ECO:0000318"/>
    <property type="project" value="GO_Central"/>
</dbReference>
<dbReference type="GO" id="GO:0008273">
    <property type="term" value="F:calcium, potassium:sodium antiporter activity"/>
    <property type="evidence" value="ECO:0000318"/>
    <property type="project" value="GO_Central"/>
</dbReference>
<dbReference type="GO" id="GO:0015293">
    <property type="term" value="F:symporter activity"/>
    <property type="evidence" value="ECO:0007669"/>
    <property type="project" value="UniProtKB-KW"/>
</dbReference>
<dbReference type="GO" id="GO:0070588">
    <property type="term" value="P:calcium ion transmembrane transport"/>
    <property type="evidence" value="ECO:0000318"/>
    <property type="project" value="GO_Central"/>
</dbReference>
<dbReference type="GO" id="GO:0006874">
    <property type="term" value="P:intracellular calcium ion homeostasis"/>
    <property type="evidence" value="ECO:0000318"/>
    <property type="project" value="GO_Central"/>
</dbReference>
<dbReference type="GO" id="GO:0060292">
    <property type="term" value="P:long-term synaptic depression"/>
    <property type="evidence" value="ECO:0000318"/>
    <property type="project" value="GO_Central"/>
</dbReference>
<dbReference type="GO" id="GO:0060291">
    <property type="term" value="P:long-term synaptic potentiation"/>
    <property type="evidence" value="ECO:0000318"/>
    <property type="project" value="GO_Central"/>
</dbReference>
<dbReference type="GO" id="GO:0007601">
    <property type="term" value="P:visual perception"/>
    <property type="evidence" value="ECO:0007669"/>
    <property type="project" value="UniProtKB-KW"/>
</dbReference>
<dbReference type="FunFam" id="1.20.1420.30:FF:000002">
    <property type="entry name" value="Sodium/potassium/calcium exchanger 2 isoform 1"/>
    <property type="match status" value="1"/>
</dbReference>
<dbReference type="FunFam" id="1.20.1420.30:FF:000004">
    <property type="entry name" value="Sodium/potassium/calcium exchanger 2 isoform 1"/>
    <property type="match status" value="1"/>
</dbReference>
<dbReference type="Gene3D" id="1.20.1420.30">
    <property type="entry name" value="NCX, central ion-binding region"/>
    <property type="match status" value="2"/>
</dbReference>
<dbReference type="InterPro" id="IPR004481">
    <property type="entry name" value="K/Na/Ca-exchanger"/>
</dbReference>
<dbReference type="InterPro" id="IPR004837">
    <property type="entry name" value="NaCa_Exmemb"/>
</dbReference>
<dbReference type="InterPro" id="IPR044880">
    <property type="entry name" value="NCX_ion-bd_dom_sf"/>
</dbReference>
<dbReference type="InterPro" id="IPR004817">
    <property type="entry name" value="SLC24A1"/>
</dbReference>
<dbReference type="NCBIfam" id="TIGR00927">
    <property type="entry name" value="2A1904"/>
    <property type="match status" value="2"/>
</dbReference>
<dbReference type="NCBIfam" id="TIGR00367">
    <property type="entry name" value="calcium/sodium antiporter"/>
    <property type="match status" value="1"/>
</dbReference>
<dbReference type="PANTHER" id="PTHR10846">
    <property type="entry name" value="SODIUM/POTASSIUM/CALCIUM EXCHANGER"/>
    <property type="match status" value="1"/>
</dbReference>
<dbReference type="PANTHER" id="PTHR10846:SF36">
    <property type="entry name" value="SODIUM_POTASSIUM_CALCIUM EXCHANGER 1"/>
    <property type="match status" value="1"/>
</dbReference>
<dbReference type="Pfam" id="PF01699">
    <property type="entry name" value="Na_Ca_ex"/>
    <property type="match status" value="2"/>
</dbReference>
<evidence type="ECO:0000250" key="1">
    <source>
        <dbReference type="UniProtKB" id="O60721"/>
    </source>
</evidence>
<evidence type="ECO:0000255" key="2"/>
<evidence type="ECO:0000256" key="3">
    <source>
        <dbReference type="SAM" id="MobiDB-lite"/>
    </source>
</evidence>
<evidence type="ECO:0000269" key="4">
    <source>
    </source>
</evidence>
<evidence type="ECO:0000269" key="5">
    <source>
    </source>
</evidence>
<evidence type="ECO:0000303" key="6">
    <source>
    </source>
</evidence>
<evidence type="ECO:0000305" key="7"/>
<evidence type="ECO:0000305" key="8">
    <source>
    </source>
</evidence>
<protein>
    <recommendedName>
        <fullName>Sodium/potassium/calcium exchanger 1</fullName>
    </recommendedName>
    <alternativeName>
        <fullName>Na(+)/K(+)/Ca(2+)-exchange protein 1</fullName>
    </alternativeName>
    <alternativeName>
        <fullName>Retinal rod Na-Ca+K exchanger</fullName>
    </alternativeName>
    <alternativeName>
        <fullName>Solute carrier family 24 member 1</fullName>
    </alternativeName>
</protein>
<keyword id="KW-0025">Alternative splicing</keyword>
<keyword id="KW-0050">Antiport</keyword>
<keyword id="KW-0106">Calcium</keyword>
<keyword id="KW-0109">Calcium transport</keyword>
<keyword id="KW-1003">Cell membrane</keyword>
<keyword id="KW-0903">Direct protein sequencing</keyword>
<keyword id="KW-0325">Glycoprotein</keyword>
<keyword id="KW-0406">Ion transport</keyword>
<keyword id="KW-0472">Membrane</keyword>
<keyword id="KW-0597">Phosphoprotein</keyword>
<keyword id="KW-0630">Potassium</keyword>
<keyword id="KW-0633">Potassium transport</keyword>
<keyword id="KW-1185">Reference proteome</keyword>
<keyword id="KW-0677">Repeat</keyword>
<keyword id="KW-0716">Sensory transduction</keyword>
<keyword id="KW-0732">Signal</keyword>
<keyword id="KW-0915">Sodium</keyword>
<keyword id="KW-0739">Sodium transport</keyword>
<keyword id="KW-0769">Symport</keyword>
<keyword id="KW-0812">Transmembrane</keyword>
<keyword id="KW-1133">Transmembrane helix</keyword>
<keyword id="KW-0813">Transport</keyword>
<keyword id="KW-0844">Vision</keyword>
<comment type="function">
    <text evidence="1 4 5">Calcium, potassium:sodium antiporter that transports 1 Ca(2+) and 1 K(+) in exchange for 4 Na(+) (PubMed:10608890, PubMed:1582405). Critical component of the visual transduction cascade, controlling the calcium concentration of outer segments during light and darkness. Light causes a rapid lowering of cytosolic free calcium in the outer segment of both retinal rod and cone photoreceptors and the light-induced lowering of calcium is caused by extrusion via this protein which plays a key role in the process of light adaptation (By similarity).</text>
</comment>
<comment type="catalytic activity">
    <reaction evidence="8">
        <text>Ca(2+)(out) + K(+)(out) + 4 Na(+)(in) = Ca(2+)(in) + K(+)(in) + 4 Na(+)(out)</text>
        <dbReference type="Rhea" id="RHEA:69967"/>
        <dbReference type="ChEBI" id="CHEBI:29101"/>
        <dbReference type="ChEBI" id="CHEBI:29103"/>
        <dbReference type="ChEBI" id="CHEBI:29108"/>
    </reaction>
</comment>
<comment type="subcellular location">
    <subcellularLocation>
        <location evidence="8">Cell membrane</location>
        <topology evidence="2">Multi-pass membrane protein</topology>
    </subcellularLocation>
</comment>
<comment type="alternative products">
    <event type="alternative splicing"/>
    <isoform>
        <id>Q28139-1</id>
        <name>1</name>
        <sequence type="displayed"/>
    </isoform>
    <isoform>
        <id>Q28139-2</id>
        <name>2</name>
        <sequence type="described" ref="VSP_006159"/>
    </isoform>
</comment>
<comment type="tissue specificity">
    <text evidence="5">Retina.</text>
</comment>
<comment type="PTM">
    <text evidence="4">The uncleaved signal sequence is required for efficient membrane targeting and proper membrane integration and topology.</text>
</comment>
<comment type="PTM">
    <text evidence="4">Glycosylated.</text>
</comment>
<comment type="similarity">
    <text evidence="7">Belongs to the Ca(2+):cation antiporter (CaCA) (TC 2.A.19) family. SLC24A subfamily.</text>
</comment>
<feature type="chain" id="PRO_0000223302" description="Sodium/potassium/calcium exchanger 1">
    <location>
        <begin position="1"/>
        <end position="1216"/>
    </location>
</feature>
<feature type="signal peptide" description="Not cleaved" evidence="4">
    <location>
        <begin position="1"/>
        <end status="unknown"/>
    </location>
</feature>
<feature type="topological domain" description="Extracellular" evidence="2">
    <location>
        <begin position="1"/>
        <end position="446"/>
    </location>
</feature>
<feature type="transmembrane region" description="Helical" evidence="2">
    <location>
        <begin position="447"/>
        <end position="467"/>
    </location>
</feature>
<feature type="topological domain" description="Cytoplasmic" evidence="2">
    <location>
        <begin position="468"/>
        <end position="491"/>
    </location>
</feature>
<feature type="transmembrane region" description="Helical" evidence="2">
    <location>
        <begin position="492"/>
        <end position="512"/>
    </location>
</feature>
<feature type="topological domain" description="Extracellular" evidence="2">
    <location>
        <begin position="513"/>
        <end position="518"/>
    </location>
</feature>
<feature type="transmembrane region" description="Helical" evidence="2">
    <location>
        <begin position="519"/>
        <end position="539"/>
    </location>
</feature>
<feature type="topological domain" description="Cytoplasmic" evidence="2">
    <location>
        <begin position="540"/>
        <end position="557"/>
    </location>
</feature>
<feature type="transmembrane region" description="Helical" evidence="2">
    <location>
        <begin position="558"/>
        <end position="578"/>
    </location>
</feature>
<feature type="topological domain" description="Extracellular" evidence="2">
    <location>
        <position position="579"/>
    </location>
</feature>
<feature type="transmembrane region" description="Helical" evidence="2">
    <location>
        <begin position="580"/>
        <end position="600"/>
    </location>
</feature>
<feature type="topological domain" description="Cytoplasmic" evidence="2">
    <location>
        <begin position="601"/>
        <end position="1024"/>
    </location>
</feature>
<feature type="transmembrane region" description="Helical" evidence="2">
    <location>
        <begin position="1025"/>
        <end position="1045"/>
    </location>
</feature>
<feature type="topological domain" description="Extracellular" evidence="2">
    <location>
        <begin position="1046"/>
        <end position="1052"/>
    </location>
</feature>
<feature type="transmembrane region" description="Helical" evidence="2">
    <location>
        <begin position="1053"/>
        <end position="1073"/>
    </location>
</feature>
<feature type="topological domain" description="Cytoplasmic" evidence="2">
    <location>
        <begin position="1074"/>
        <end position="1088"/>
    </location>
</feature>
<feature type="transmembrane region" description="Helical" evidence="2">
    <location>
        <begin position="1089"/>
        <end position="1109"/>
    </location>
</feature>
<feature type="topological domain" description="Extracellular" evidence="2">
    <location>
        <begin position="1110"/>
        <end position="1127"/>
    </location>
</feature>
<feature type="transmembrane region" description="Helical" evidence="2">
    <location>
        <begin position="1128"/>
        <end position="1148"/>
    </location>
</feature>
<feature type="topological domain" description="Cytoplasmic" evidence="2">
    <location>
        <begin position="1149"/>
        <end position="1157"/>
    </location>
</feature>
<feature type="transmembrane region" description="Helical" evidence="2">
    <location>
        <begin position="1158"/>
        <end position="1178"/>
    </location>
</feature>
<feature type="topological domain" description="Extracellular" evidence="2">
    <location>
        <begin position="1179"/>
        <end position="1185"/>
    </location>
</feature>
<feature type="transmembrane region" description="Helical" evidence="2">
    <location>
        <begin position="1186"/>
        <end position="1206"/>
    </location>
</feature>
<feature type="topological domain" description="Cytoplasmic" evidence="2">
    <location>
        <begin position="1207"/>
        <end position="1216"/>
    </location>
</feature>
<feature type="repeat" description="Alpha-1">
    <location>
        <begin position="488"/>
        <end position="528"/>
    </location>
</feature>
<feature type="repeat" description="1; approximate">
    <location>
        <begin position="796"/>
        <end position="811"/>
    </location>
</feature>
<feature type="repeat" description="2">
    <location>
        <begin position="812"/>
        <end position="828"/>
    </location>
</feature>
<feature type="repeat" description="3">
    <location>
        <begin position="829"/>
        <end position="845"/>
    </location>
</feature>
<feature type="repeat" description="4">
    <location>
        <begin position="846"/>
        <end position="862"/>
    </location>
</feature>
<feature type="repeat" description="5">
    <location>
        <begin position="863"/>
        <end position="879"/>
    </location>
</feature>
<feature type="repeat" description="6">
    <location>
        <begin position="880"/>
        <end position="896"/>
    </location>
</feature>
<feature type="repeat" description="7">
    <location>
        <begin position="897"/>
        <end position="913"/>
    </location>
</feature>
<feature type="repeat" description="8; approximate">
    <location>
        <begin position="914"/>
        <end position="928"/>
    </location>
</feature>
<feature type="repeat" description="Alpha-2">
    <location>
        <begin position="1096"/>
        <end position="1127"/>
    </location>
</feature>
<feature type="region of interest" description="Disordered" evidence="3">
    <location>
        <begin position="94"/>
        <end position="196"/>
    </location>
</feature>
<feature type="region of interest" description="Disordered" evidence="3">
    <location>
        <begin position="677"/>
        <end position="1018"/>
    </location>
</feature>
<feature type="region of interest" description="8 X 17 AA tandem repeats of D-E-D-E-G-E-I-Q-A-G-E-[GA]-G-E-V-[EK]-G">
    <location>
        <begin position="796"/>
        <end position="928"/>
    </location>
</feature>
<feature type="compositionally biased region" description="Polar residues" evidence="3">
    <location>
        <begin position="110"/>
        <end position="135"/>
    </location>
</feature>
<feature type="compositionally biased region" description="Polar residues" evidence="3">
    <location>
        <begin position="144"/>
        <end position="166"/>
    </location>
</feature>
<feature type="compositionally biased region" description="Basic and acidic residues" evidence="3">
    <location>
        <begin position="702"/>
        <end position="712"/>
    </location>
</feature>
<feature type="compositionally biased region" description="Acidic residues" evidence="3">
    <location>
        <begin position="824"/>
        <end position="834"/>
    </location>
</feature>
<feature type="compositionally biased region" description="Acidic residues" evidence="3">
    <location>
        <begin position="841"/>
        <end position="851"/>
    </location>
</feature>
<feature type="compositionally biased region" description="Acidic residues" evidence="3">
    <location>
        <begin position="858"/>
        <end position="868"/>
    </location>
</feature>
<feature type="compositionally biased region" description="Acidic residues" evidence="3">
    <location>
        <begin position="875"/>
        <end position="885"/>
    </location>
</feature>
<feature type="compositionally biased region" description="Acidic residues" evidence="3">
    <location>
        <begin position="892"/>
        <end position="902"/>
    </location>
</feature>
<feature type="compositionally biased region" description="Acidic residues" evidence="3">
    <location>
        <begin position="924"/>
        <end position="941"/>
    </location>
</feature>
<feature type="compositionally biased region" description="Acidic residues" evidence="3">
    <location>
        <begin position="981"/>
        <end position="1011"/>
    </location>
</feature>
<feature type="modified residue" description="Phosphoserine" evidence="2">
    <location>
        <position position="652"/>
    </location>
</feature>
<feature type="modified residue" description="Phosphothreonine" evidence="1">
    <location>
        <position position="717"/>
    </location>
</feature>
<feature type="glycosylation site" description="N-linked (GlcNAc...) asparagine" evidence="2">
    <location>
        <position position="290"/>
    </location>
</feature>
<feature type="glycosylation site" description="N-linked (GlcNAc...) asparagine" evidence="2">
    <location>
        <position position="303"/>
    </location>
</feature>
<feature type="splice variant" id="VSP_006159" description="In isoform 2." evidence="6">
    <location>
        <begin position="868"/>
        <end position="884"/>
    </location>
</feature>
<feature type="mutagenesis site" description="Does not affect the targeting." evidence="4">
    <original>R</original>
    <variation>A</variation>
    <location>
        <position position="65"/>
    </location>
</feature>
<feature type="sequence conflict" description="In Ref. 1; AA sequence." evidence="7" ref="1">
    <location>
        <position position="84"/>
    </location>
</feature>
<feature type="sequence conflict" description="In Ref. 1; AA sequence." evidence="7" ref="1">
    <location>
        <position position="234"/>
    </location>
</feature>
<feature type="sequence conflict" description="In Ref. 1; AA sequence." evidence="7" ref="1">
    <location>
        <begin position="244"/>
        <end position="245"/>
    </location>
</feature>
<feature type="sequence conflict" description="In Ref. 2; AAB88884." evidence="7" ref="2">
    <original>A</original>
    <variation>G</variation>
    <location>
        <position position="857"/>
    </location>
</feature>
<sequence>MGKLIRMGAQERRSLWPKRLHWSRPLFLLGMLIIGSTYQYLTSPQGLPTLWAAVSSQHPVKVASRDLSNKEMMMVSSETSKSSSEMEVEAWAPEATAGRDGTPPGIARKNTPSTPRGTASITPAIPNNYSPTPTGTGKVKEDTSATPSGVLNHYTQSRPMVNSYTRLTARGEVKSSRPTQSRGKEEKYSPSPLGRMVNSYAPSTLMTMPRSHGITPRTTVKDREIMATKKMLATNPSKRLVEKTTPTPLKGITDNTPTFLLSDLETDTLTSPRNVVEKKTLTTPRRVDSNSSTNHQGLVGKNNLTTPQGMVLEHTAAVSEGQVTISTMTRSSPTETKASTDAWKVRNPLPRTSAPIIRISSATFRGLLKNPSKAPSTPAAPRVRANPTIQVRHCLVVEPAPVAPTAPSPSWTTAVIPGIPSPSGQPDLYPKAEYPRDLFSVEERRQGWVVLHIFGMMYVFVALAIVCDEYFVPALGVITDKLQISEDVAGATFMAAGGSAPELFTSLIGVFISHSNVGIGTIVGSAVFNILFVIGTCALFSREILNLTWWPLFRDITFYIFDLMMLILFFLDSLIAWWESVLLLLAYAFYVFTMKWNQQLELWVKEQLNKRPVAKVMALGDLSKPGDGTVVVDEQQDNKKLKLSSMLTRGSSSASLHNSTIRSTIYQLMLHSLDPLGEARPSKDKEEETLIPEAKATPQAKAESKPEEEPAKLPEVTVTPAPAPDVKGDQEEDPGSQGVGAEAENTGERTGGEAEAPAEGENGERSGGDAALGGESEGKAENESEGDIPAERRGDDEDEGEIQAEGGEVKGDEDEGEIQAGEGGEVEGDEDEGEIQAGEGGEVEGDEDEGEIQAGEAGEVEGDEDEGEIQAGEGGEVEGDEDEGEIQAGEAGEVEGDEDEGEIQAGEGGEVKGDEGEIQAGEAGEVEGEDGEVEGGEDEGEIQAGEGGEGETGEQELNAEIQGEAKDDEEGVDGEGGGDGGDSEDEEEEDEEEEDEEEEEEEEEEEEEENEQPLSLEWPETRRKQAIYLFLLPIVFPLWLTVPDVRRLEAKKFFVITFLGSILWIAMFSYLMVWWAHQVGETIGISEEIMGLTILAAGTSIPDLITSVIVARKGLGDMAVSSSVGSNIFDITVGLPLPWMLFSLINGLQPVAVSSNGLFCAIVLLFLMLLFVISSIALCKWRMNKILGFTMFLLYFVFLIISVMLEDRIISCPVSV</sequence>
<name>NCKX1_BOVIN</name>
<organism>
    <name type="scientific">Bos taurus</name>
    <name type="common">Bovine</name>
    <dbReference type="NCBI Taxonomy" id="9913"/>
    <lineage>
        <taxon>Eukaryota</taxon>
        <taxon>Metazoa</taxon>
        <taxon>Chordata</taxon>
        <taxon>Craniata</taxon>
        <taxon>Vertebrata</taxon>
        <taxon>Euteleostomi</taxon>
        <taxon>Mammalia</taxon>
        <taxon>Eutheria</taxon>
        <taxon>Laurasiatheria</taxon>
        <taxon>Artiodactyla</taxon>
        <taxon>Ruminantia</taxon>
        <taxon>Pecora</taxon>
        <taxon>Bovidae</taxon>
        <taxon>Bovinae</taxon>
        <taxon>Bos</taxon>
    </lineage>
</organism>
<proteinExistence type="evidence at protein level"/>